<organism>
    <name type="scientific">Saccharomyces cerevisiae (strain ATCC 204508 / S288c)</name>
    <name type="common">Baker's yeast</name>
    <dbReference type="NCBI Taxonomy" id="559292"/>
    <lineage>
        <taxon>Eukaryota</taxon>
        <taxon>Fungi</taxon>
        <taxon>Dikarya</taxon>
        <taxon>Ascomycota</taxon>
        <taxon>Saccharomycotina</taxon>
        <taxon>Saccharomycetes</taxon>
        <taxon>Saccharomycetales</taxon>
        <taxon>Saccharomycetaceae</taxon>
        <taxon>Saccharomyces</taxon>
    </lineage>
</organism>
<name>ROG3_YEAST</name>
<keyword id="KW-1185">Reference proteome</keyword>
<proteinExistence type="evidence at protein level"/>
<feature type="chain" id="PRO_0000202690" description="Protein ROG3">
    <location>
        <begin position="1"/>
        <end position="733"/>
    </location>
</feature>
<feature type="region of interest" description="Disordered" evidence="1">
    <location>
        <begin position="518"/>
        <end position="566"/>
    </location>
</feature>
<feature type="region of interest" description="Disordered" evidence="1">
    <location>
        <begin position="636"/>
        <end position="658"/>
    </location>
</feature>
<feature type="region of interest" description="Disordered" evidence="1">
    <location>
        <begin position="693"/>
        <end position="733"/>
    </location>
</feature>
<feature type="short sequence motif" description="PY-motif">
    <location>
        <begin position="460"/>
        <end position="463"/>
    </location>
</feature>
<feature type="short sequence motif" description="PY-motif">
    <location>
        <begin position="625"/>
        <end position="628"/>
    </location>
</feature>
<feature type="compositionally biased region" description="Low complexity" evidence="1">
    <location>
        <begin position="523"/>
        <end position="540"/>
    </location>
</feature>
<feature type="compositionally biased region" description="Low complexity" evidence="1">
    <location>
        <begin position="646"/>
        <end position="658"/>
    </location>
</feature>
<feature type="mutagenesis site" description="Reduced binding to RSP5." evidence="2">
    <original>PP</original>
    <variation>QA</variation>
    <location>
        <begin position="460"/>
        <end position="461"/>
    </location>
</feature>
<feature type="mutagenesis site" description="Reduced binding to RSP5." evidence="2">
    <original>PP</original>
    <variation>QA</variation>
    <location>
        <begin position="625"/>
        <end position="626"/>
    </location>
</feature>
<dbReference type="EMBL" id="D50617">
    <property type="protein sequence ID" value="BAA09261.1"/>
    <property type="molecule type" value="Genomic_DNA"/>
</dbReference>
<dbReference type="EMBL" id="BK006940">
    <property type="protein sequence ID" value="DAA12462.1"/>
    <property type="molecule type" value="Genomic_DNA"/>
</dbReference>
<dbReference type="PIR" id="S56277">
    <property type="entry name" value="S56277"/>
</dbReference>
<dbReference type="RefSeq" id="NP_116677.3">
    <property type="nucleotide sequence ID" value="NM_001179987.3"/>
</dbReference>
<dbReference type="BioGRID" id="31175">
    <property type="interactions" value="50"/>
</dbReference>
<dbReference type="DIP" id="DIP-4111N"/>
<dbReference type="FunCoup" id="P43602">
    <property type="interactions" value="71"/>
</dbReference>
<dbReference type="IntAct" id="P43602">
    <property type="interactions" value="4"/>
</dbReference>
<dbReference type="MINT" id="P43602"/>
<dbReference type="STRING" id="4932.YFR022W"/>
<dbReference type="iPTMnet" id="P43602"/>
<dbReference type="PaxDb" id="4932-YFR022W"/>
<dbReference type="PeptideAtlas" id="P43602"/>
<dbReference type="EnsemblFungi" id="YFR022W_mRNA">
    <property type="protein sequence ID" value="YFR022W"/>
    <property type="gene ID" value="YFR022W"/>
</dbReference>
<dbReference type="GeneID" id="850578"/>
<dbReference type="KEGG" id="sce:YFR022W"/>
<dbReference type="AGR" id="SGD:S000001918"/>
<dbReference type="SGD" id="S000001918">
    <property type="gene designation" value="ROG3"/>
</dbReference>
<dbReference type="VEuPathDB" id="FungiDB:YFR022W"/>
<dbReference type="eggNOG" id="KOG3780">
    <property type="taxonomic scope" value="Eukaryota"/>
</dbReference>
<dbReference type="GeneTree" id="ENSGT00940000176571"/>
<dbReference type="HOGENOM" id="CLU_018982_1_0_1"/>
<dbReference type="InParanoid" id="P43602"/>
<dbReference type="OMA" id="GMATPFH"/>
<dbReference type="OrthoDB" id="2333384at2759"/>
<dbReference type="BioCyc" id="YEAST:G3O-30473-MONOMER"/>
<dbReference type="Reactome" id="R-SCE-844456">
    <property type="pathway name" value="The NLRP3 inflammasome"/>
</dbReference>
<dbReference type="BioGRID-ORCS" id="850578">
    <property type="hits" value="0 hits in 10 CRISPR screens"/>
</dbReference>
<dbReference type="PRO" id="PR:P43602"/>
<dbReference type="Proteomes" id="UP000002311">
    <property type="component" value="Chromosome VI"/>
</dbReference>
<dbReference type="RNAct" id="P43602">
    <property type="molecule type" value="protein"/>
</dbReference>
<dbReference type="GO" id="GO:0005737">
    <property type="term" value="C:cytoplasm"/>
    <property type="evidence" value="ECO:0000318"/>
    <property type="project" value="GO_Central"/>
</dbReference>
<dbReference type="GO" id="GO:0005829">
    <property type="term" value="C:cytosol"/>
    <property type="evidence" value="ECO:0007005"/>
    <property type="project" value="SGD"/>
</dbReference>
<dbReference type="GO" id="GO:0005886">
    <property type="term" value="C:plasma membrane"/>
    <property type="evidence" value="ECO:0000318"/>
    <property type="project" value="GO_Central"/>
</dbReference>
<dbReference type="GO" id="GO:0030674">
    <property type="term" value="F:protein-macromolecule adaptor activity"/>
    <property type="evidence" value="ECO:0000318"/>
    <property type="project" value="GO_Central"/>
</dbReference>
<dbReference type="GO" id="GO:0031625">
    <property type="term" value="F:ubiquitin protein ligase binding"/>
    <property type="evidence" value="ECO:0000314"/>
    <property type="project" value="SGD"/>
</dbReference>
<dbReference type="GO" id="GO:0071444">
    <property type="term" value="P:cellular response to pheromone"/>
    <property type="evidence" value="ECO:0000315"/>
    <property type="project" value="SGD"/>
</dbReference>
<dbReference type="GO" id="GO:0000747">
    <property type="term" value="P:conjugation with cellular fusion"/>
    <property type="evidence" value="ECO:0000315"/>
    <property type="project" value="SGD"/>
</dbReference>
<dbReference type="GO" id="GO:0002092">
    <property type="term" value="P:positive regulation of receptor internalization"/>
    <property type="evidence" value="ECO:0000316"/>
    <property type="project" value="SGD"/>
</dbReference>
<dbReference type="GO" id="GO:0070086">
    <property type="term" value="P:ubiquitin-dependent endocytosis"/>
    <property type="evidence" value="ECO:0000318"/>
    <property type="project" value="GO_Central"/>
</dbReference>
<dbReference type="Gene3D" id="2.60.40.640">
    <property type="match status" value="1"/>
</dbReference>
<dbReference type="InterPro" id="IPR014752">
    <property type="entry name" value="Arrestin-like_C"/>
</dbReference>
<dbReference type="InterPro" id="IPR011021">
    <property type="entry name" value="Arrestin-like_N"/>
</dbReference>
<dbReference type="InterPro" id="IPR011022">
    <property type="entry name" value="Arrestin_C-like"/>
</dbReference>
<dbReference type="InterPro" id="IPR050357">
    <property type="entry name" value="Arrestin_domain-protein"/>
</dbReference>
<dbReference type="PANTHER" id="PTHR11188">
    <property type="entry name" value="ARRESTIN DOMAIN CONTAINING PROTEIN"/>
    <property type="match status" value="1"/>
</dbReference>
<dbReference type="PANTHER" id="PTHR11188:SF17">
    <property type="entry name" value="FI21816P1"/>
    <property type="match status" value="1"/>
</dbReference>
<dbReference type="Pfam" id="PF02752">
    <property type="entry name" value="Arrestin_C"/>
    <property type="match status" value="1"/>
</dbReference>
<dbReference type="Pfam" id="PF00339">
    <property type="entry name" value="Arrestin_N"/>
    <property type="match status" value="1"/>
</dbReference>
<dbReference type="SMART" id="SM01017">
    <property type="entry name" value="Arrestin_C"/>
    <property type="match status" value="1"/>
</dbReference>
<protein>
    <recommendedName>
        <fullName>Protein ROG3</fullName>
    </recommendedName>
    <alternativeName>
        <fullName>Revertant of glycogen synthase kinase mutation protein 3</fullName>
    </alternativeName>
</protein>
<comment type="function">
    <text evidence="2">Involved in resistance to GST substrate o-dinitrobenzene (o-DNB).</text>
</comment>
<comment type="subunit">
    <text evidence="2">Interacts with RSP5 via its 2 PY-motifs.</text>
</comment>
<comment type="interaction">
    <interactant intactId="EBI-22976">
        <id>P43602</id>
    </interactant>
    <interactant intactId="EBI-16219">
        <id>P39940</id>
        <label>RSP5</label>
    </interactant>
    <organismsDiffer>false</organismsDiffer>
    <experiments>3</experiments>
</comment>
<comment type="domain">
    <text evidence="2">The PY-motifs are required for the interaction with RSP5 ubiquitin-ligase.</text>
</comment>
<comment type="similarity">
    <text evidence="3">Belongs to the arrestin family.</text>
</comment>
<accession>P43602</accession>
<accession>D6VTQ2</accession>
<evidence type="ECO:0000256" key="1">
    <source>
        <dbReference type="SAM" id="MobiDB-lite"/>
    </source>
</evidence>
<evidence type="ECO:0000269" key="2">
    <source>
    </source>
</evidence>
<evidence type="ECO:0000305" key="3"/>
<sequence>MGFSSGKSTKKKPLLFDIRLKNVDNDVILLKGPPNEAPSVLLSGCIVLSINEPMQIKSISLRLYGKIQIDVPLERPQDASSSSLSSSPPKIRKYNKVFYNYAWDNVNLKEYLSGLRGQSGLAGSSSSSNILGTRQRAQSTSSLKSLKGSSSPSSCTLDKGNYDFPFSAILPGSLPESVESLPNCFVTYSMESVIERSKNYSDLICRKNIRVLRTISPAAVELSETVCVDNSWPDKVDYSISVPNKAVAIGSATPINISIVPLSKGLKLGSIKVVLFENYQYCDPFPPVISENRQVTELNLEDPLNESSGEFNGNGCFVNNPFFQPDHSFQDKWEIDTILQIPNSLSNCVQDCDVRSNIKVRHKLKFFIILINPDGHKSELRASLPIQLFISPFVALSIKPLSSSNLYSLFSTTNQKDENSSQEEEEEYLFSRSASVTGLELLADMRSGGSVPTISDLMTPPNYEMHVYDRLYSGSFTRTAVETSGTCTPLGSECSTVEDQQQDLEDLRIRLTKIRNQRDNLGLPPSASSAAASRSLSPLLNVPAPEDGTERILPQSALGPNSGSVPGVHSNVSPVLLSRSPAPSVSAHEVLPVPSGLNYPETQNLNKVPSYGKAMKYDIIGEDLPPSYPCAIQNVQPRKPSRVHSRNSSTTLSSSIPTSFHSSSFMSSTASPISIINGSRSSSSGVSLNTLNELTSKTSNNPSSNSMKRSPTRRRATSLAGFMGGFLSKGNKR</sequence>
<gene>
    <name type="primary">ROG3</name>
    <name type="ordered locus">YFR022W</name>
</gene>
<reference key="1">
    <citation type="journal article" date="1995" name="Nat. Genet.">
        <title>Analysis of the nucleotide sequence of chromosome VI from Saccharomyces cerevisiae.</title>
        <authorList>
            <person name="Murakami Y."/>
            <person name="Naitou M."/>
            <person name="Hagiwara H."/>
            <person name="Shibata T."/>
            <person name="Ozawa M."/>
            <person name="Sasanuma S."/>
            <person name="Sasanuma M."/>
            <person name="Tsuchiya Y."/>
            <person name="Soeda E."/>
            <person name="Yokoyama K."/>
            <person name="Yamazaki M."/>
            <person name="Tashiro H."/>
            <person name="Eki T."/>
        </authorList>
    </citation>
    <scope>NUCLEOTIDE SEQUENCE [LARGE SCALE GENOMIC DNA]</scope>
    <source>
        <strain>ATCC 204508 / S288c</strain>
    </source>
</reference>
<reference key="2">
    <citation type="journal article" date="2014" name="G3 (Bethesda)">
        <title>The reference genome sequence of Saccharomyces cerevisiae: Then and now.</title>
        <authorList>
            <person name="Engel S.R."/>
            <person name="Dietrich F.S."/>
            <person name="Fisk D.G."/>
            <person name="Binkley G."/>
            <person name="Balakrishnan R."/>
            <person name="Costanzo M.C."/>
            <person name="Dwight S.S."/>
            <person name="Hitz B.C."/>
            <person name="Karra K."/>
            <person name="Nash R.S."/>
            <person name="Weng S."/>
            <person name="Wong E.D."/>
            <person name="Lloyd P."/>
            <person name="Skrzypek M.S."/>
            <person name="Miyasato S.R."/>
            <person name="Simison M."/>
            <person name="Cherry J.M."/>
        </authorList>
    </citation>
    <scope>GENOME REANNOTATION</scope>
    <source>
        <strain>ATCC 204508 / S288c</strain>
    </source>
</reference>
<reference key="3">
    <citation type="journal article" date="2002" name="FEBS Lett.">
        <title>PY motifs of Rod1 are required for binding to Rsp5 and for drug resistance.</title>
        <authorList>
            <person name="Andoh T."/>
            <person name="Hirata Y."/>
            <person name="Kikuchi A."/>
        </authorList>
    </citation>
    <scope>FUNCTION</scope>
    <scope>DOMAIN</scope>
    <scope>INTERACTION WITH RSP5</scope>
    <scope>MUTAGENESIS OF 460-PRO-PRO-461 AND 625-PRO-PRO-626</scope>
</reference>
<reference key="4">
    <citation type="journal article" date="2008" name="Mol. Cell. Proteomics">
        <title>A multidimensional chromatography technology for in-depth phosphoproteome analysis.</title>
        <authorList>
            <person name="Albuquerque C.P."/>
            <person name="Smolka M.B."/>
            <person name="Payne S.H."/>
            <person name="Bafna V."/>
            <person name="Eng J."/>
            <person name="Zhou H."/>
        </authorList>
    </citation>
    <scope>IDENTIFICATION BY MASS SPECTROMETRY [LARGE SCALE ANALYSIS]</scope>
</reference>
<reference key="5">
    <citation type="journal article" date="2009" name="Science">
        <title>Global analysis of Cdk1 substrate phosphorylation sites provides insights into evolution.</title>
        <authorList>
            <person name="Holt L.J."/>
            <person name="Tuch B.B."/>
            <person name="Villen J."/>
            <person name="Johnson A.D."/>
            <person name="Gygi S.P."/>
            <person name="Morgan D.O."/>
        </authorList>
    </citation>
    <scope>IDENTIFICATION BY MASS SPECTROMETRY [LARGE SCALE ANALYSIS]</scope>
</reference>